<comment type="function">
    <text evidence="1">mRNA decapping enzyme that specifically removes the nicotinamide adenine dinucleotide (NAD) cap from a subset of mRNAs by hydrolyzing the diphosphate linkage to produce nicotinamide mononucleotide (NMN) and 5' monophosphate mRNA. The NAD-cap is present at the 5'-end of some mRNAs and stabilizes RNA against 5'-processing. Has preference for mRNAs with a 5'-end purine. Catalyzes the hydrolysis of a broad range of dinucleotide pyrophosphates.</text>
</comment>
<comment type="catalytic activity">
    <reaction evidence="1">
        <text>a 5'-end NAD(+)-phospho-ribonucleoside in mRNA + H2O = a 5'-end phospho-adenosine-phospho-ribonucleoside in mRNA + beta-nicotinamide D-ribonucleotide + 2 H(+)</text>
        <dbReference type="Rhea" id="RHEA:60876"/>
        <dbReference type="Rhea" id="RHEA-COMP:15698"/>
        <dbReference type="Rhea" id="RHEA-COMP:15719"/>
        <dbReference type="ChEBI" id="CHEBI:14649"/>
        <dbReference type="ChEBI" id="CHEBI:15377"/>
        <dbReference type="ChEBI" id="CHEBI:15378"/>
        <dbReference type="ChEBI" id="CHEBI:144029"/>
        <dbReference type="ChEBI" id="CHEBI:144051"/>
    </reaction>
    <physiologicalReaction direction="left-to-right" evidence="1">
        <dbReference type="Rhea" id="RHEA:60877"/>
    </physiologicalReaction>
</comment>
<comment type="catalytic activity">
    <reaction evidence="1">
        <text>NAD(+) + H2O = beta-nicotinamide D-ribonucleotide + AMP + 2 H(+)</text>
        <dbReference type="Rhea" id="RHEA:11800"/>
        <dbReference type="ChEBI" id="CHEBI:14649"/>
        <dbReference type="ChEBI" id="CHEBI:15377"/>
        <dbReference type="ChEBI" id="CHEBI:15378"/>
        <dbReference type="ChEBI" id="CHEBI:57540"/>
        <dbReference type="ChEBI" id="CHEBI:456215"/>
        <dbReference type="EC" id="3.6.1.22"/>
    </reaction>
</comment>
<comment type="catalytic activity">
    <reaction evidence="1">
        <text>NADH + H2O = reduced beta-nicotinamide D-ribonucleotide + AMP + 2 H(+)</text>
        <dbReference type="Rhea" id="RHEA:48868"/>
        <dbReference type="ChEBI" id="CHEBI:15377"/>
        <dbReference type="ChEBI" id="CHEBI:15378"/>
        <dbReference type="ChEBI" id="CHEBI:57945"/>
        <dbReference type="ChEBI" id="CHEBI:90832"/>
        <dbReference type="ChEBI" id="CHEBI:456215"/>
        <dbReference type="EC" id="3.6.1.22"/>
    </reaction>
</comment>
<comment type="cofactor">
    <cofactor evidence="1">
        <name>Mg(2+)</name>
        <dbReference type="ChEBI" id="CHEBI:18420"/>
    </cofactor>
    <cofactor evidence="1">
        <name>Mn(2+)</name>
        <dbReference type="ChEBI" id="CHEBI:29035"/>
    </cofactor>
    <text evidence="1">Divalent metal cations. Mg(2+) or Mn(2+).</text>
</comment>
<comment type="cofactor">
    <cofactor evidence="1">
        <name>Zn(2+)</name>
        <dbReference type="ChEBI" id="CHEBI:29105"/>
    </cofactor>
    <text evidence="1">Binds 1 zinc ion per subunit.</text>
</comment>
<comment type="subunit">
    <text evidence="1">Homodimer.</text>
</comment>
<comment type="similarity">
    <text evidence="1">Belongs to the Nudix hydrolase family. NudC subfamily.</text>
</comment>
<evidence type="ECO:0000255" key="1">
    <source>
        <dbReference type="HAMAP-Rule" id="MF_00297"/>
    </source>
</evidence>
<organism>
    <name type="scientific">Escherichia coli O9:H4 (strain HS)</name>
    <dbReference type="NCBI Taxonomy" id="331112"/>
    <lineage>
        <taxon>Bacteria</taxon>
        <taxon>Pseudomonadati</taxon>
        <taxon>Pseudomonadota</taxon>
        <taxon>Gammaproteobacteria</taxon>
        <taxon>Enterobacterales</taxon>
        <taxon>Enterobacteriaceae</taxon>
        <taxon>Escherichia</taxon>
    </lineage>
</organism>
<sequence length="257" mass="29689">MDRIIEKLDHGWWVVSHEQKLWLPKGELPYGEAANFDLVGQRALQIGEWQGEPVWLVQQQRRHDMGSVRQVIDLDVGLFQLAGRGVQLAEFYRSHKYCGYCGHEMYPSKTEWAMLCSHCRERYYPQIAPCIIVAIRRDDSILLAQHTRHRNGVHTVLAGFVEVGETLEQAVAREVMEESGIKVKNLRYVTSQPWPFPQSLMTAFMAEYDSGDIVIDPKELLEANWYRYDDLPLLPPPGTVARRLIEDTVAMCRAEYE</sequence>
<protein>
    <recommendedName>
        <fullName evidence="1">NAD-capped RNA hydrolase NudC</fullName>
        <shortName evidence="1">DeNADding enzyme NudC</shortName>
        <ecNumber evidence="1">3.6.1.-</ecNumber>
    </recommendedName>
    <alternativeName>
        <fullName evidence="1">NADH pyrophosphatase</fullName>
        <ecNumber evidence="1">3.6.1.22</ecNumber>
    </alternativeName>
</protein>
<reference key="1">
    <citation type="journal article" date="2008" name="J. Bacteriol.">
        <title>The pangenome structure of Escherichia coli: comparative genomic analysis of E. coli commensal and pathogenic isolates.</title>
        <authorList>
            <person name="Rasko D.A."/>
            <person name="Rosovitz M.J."/>
            <person name="Myers G.S.A."/>
            <person name="Mongodin E.F."/>
            <person name="Fricke W.F."/>
            <person name="Gajer P."/>
            <person name="Crabtree J."/>
            <person name="Sebaihia M."/>
            <person name="Thomson N.R."/>
            <person name="Chaudhuri R."/>
            <person name="Henderson I.R."/>
            <person name="Sperandio V."/>
            <person name="Ravel J."/>
        </authorList>
    </citation>
    <scope>NUCLEOTIDE SEQUENCE [LARGE SCALE GENOMIC DNA]</scope>
    <source>
        <strain>HS</strain>
    </source>
</reference>
<name>NUDC_ECOHS</name>
<keyword id="KW-0378">Hydrolase</keyword>
<keyword id="KW-0460">Magnesium</keyword>
<keyword id="KW-0464">Manganese</keyword>
<keyword id="KW-0479">Metal-binding</keyword>
<keyword id="KW-0520">NAD</keyword>
<keyword id="KW-0862">Zinc</keyword>
<gene>
    <name evidence="1" type="primary">nudC</name>
    <name type="ordered locus">EcHS_A4230</name>
</gene>
<proteinExistence type="inferred from homology"/>
<feature type="chain" id="PRO_1000059296" description="NAD-capped RNA hydrolase NudC">
    <location>
        <begin position="1"/>
        <end position="257"/>
    </location>
</feature>
<feature type="domain" description="Nudix hydrolase" evidence="1">
    <location>
        <begin position="125"/>
        <end position="248"/>
    </location>
</feature>
<feature type="short sequence motif" description="Nudix box" evidence="1">
    <location>
        <begin position="159"/>
        <end position="180"/>
    </location>
</feature>
<feature type="binding site" evidence="1">
    <location>
        <position position="25"/>
    </location>
    <ligand>
        <name>substrate</name>
    </ligand>
</feature>
<feature type="binding site" evidence="1">
    <location>
        <position position="69"/>
    </location>
    <ligand>
        <name>substrate</name>
    </ligand>
</feature>
<feature type="binding site" evidence="1">
    <location>
        <position position="98"/>
    </location>
    <ligand>
        <name>Zn(2+)</name>
        <dbReference type="ChEBI" id="CHEBI:29105"/>
    </ligand>
</feature>
<feature type="binding site" evidence="1">
    <location>
        <position position="101"/>
    </location>
    <ligand>
        <name>Zn(2+)</name>
        <dbReference type="ChEBI" id="CHEBI:29105"/>
    </ligand>
</feature>
<feature type="binding site" evidence="1">
    <location>
        <position position="111"/>
    </location>
    <ligand>
        <name>substrate</name>
    </ligand>
</feature>
<feature type="binding site" evidence="1">
    <location>
        <position position="116"/>
    </location>
    <ligand>
        <name>Zn(2+)</name>
        <dbReference type="ChEBI" id="CHEBI:29105"/>
    </ligand>
</feature>
<feature type="binding site" evidence="1">
    <location>
        <position position="119"/>
    </location>
    <ligand>
        <name>Zn(2+)</name>
        <dbReference type="ChEBI" id="CHEBI:29105"/>
    </ligand>
</feature>
<feature type="binding site" evidence="1">
    <location>
        <position position="124"/>
    </location>
    <ligand>
        <name>substrate</name>
    </ligand>
</feature>
<feature type="binding site" evidence="1">
    <location>
        <position position="158"/>
    </location>
    <ligand>
        <name>a divalent metal cation</name>
        <dbReference type="ChEBI" id="CHEBI:60240"/>
        <label>1</label>
    </ligand>
</feature>
<feature type="binding site" evidence="1">
    <location>
        <position position="174"/>
    </location>
    <ligand>
        <name>a divalent metal cation</name>
        <dbReference type="ChEBI" id="CHEBI:60240"/>
        <label>2</label>
    </ligand>
</feature>
<feature type="binding site" evidence="1">
    <location>
        <position position="174"/>
    </location>
    <ligand>
        <name>a divalent metal cation</name>
        <dbReference type="ChEBI" id="CHEBI:60240"/>
        <label>3</label>
    </ligand>
</feature>
<feature type="binding site" evidence="1">
    <location>
        <position position="178"/>
    </location>
    <ligand>
        <name>a divalent metal cation</name>
        <dbReference type="ChEBI" id="CHEBI:60240"/>
        <label>1</label>
    </ligand>
</feature>
<feature type="binding site" evidence="1">
    <location>
        <position position="178"/>
    </location>
    <ligand>
        <name>a divalent metal cation</name>
        <dbReference type="ChEBI" id="CHEBI:60240"/>
        <label>3</label>
    </ligand>
</feature>
<feature type="binding site" evidence="1">
    <location>
        <begin position="192"/>
        <end position="199"/>
    </location>
    <ligand>
        <name>substrate</name>
    </ligand>
</feature>
<feature type="binding site" evidence="1">
    <location>
        <position position="219"/>
    </location>
    <ligand>
        <name>a divalent metal cation</name>
        <dbReference type="ChEBI" id="CHEBI:60240"/>
        <label>1</label>
    </ligand>
</feature>
<feature type="binding site" evidence="1">
    <location>
        <position position="219"/>
    </location>
    <ligand>
        <name>a divalent metal cation</name>
        <dbReference type="ChEBI" id="CHEBI:60240"/>
        <label>3</label>
    </ligand>
</feature>
<feature type="binding site" evidence="1">
    <location>
        <position position="241"/>
    </location>
    <ligand>
        <name>substrate</name>
    </ligand>
</feature>
<accession>A8A796</accession>
<dbReference type="EC" id="3.6.1.-" evidence="1"/>
<dbReference type="EC" id="3.6.1.22" evidence="1"/>
<dbReference type="EMBL" id="CP000802">
    <property type="protein sequence ID" value="ABV08400.1"/>
    <property type="molecule type" value="Genomic_DNA"/>
</dbReference>
<dbReference type="RefSeq" id="WP_000373940.1">
    <property type="nucleotide sequence ID" value="NC_009800.1"/>
</dbReference>
<dbReference type="SMR" id="A8A796"/>
<dbReference type="GeneID" id="93777898"/>
<dbReference type="KEGG" id="ecx:EcHS_A4230"/>
<dbReference type="HOGENOM" id="CLU_037162_0_1_6"/>
<dbReference type="GO" id="GO:0005829">
    <property type="term" value="C:cytosol"/>
    <property type="evidence" value="ECO:0007669"/>
    <property type="project" value="TreeGrafter"/>
</dbReference>
<dbReference type="GO" id="GO:0000287">
    <property type="term" value="F:magnesium ion binding"/>
    <property type="evidence" value="ECO:0007669"/>
    <property type="project" value="UniProtKB-UniRule"/>
</dbReference>
<dbReference type="GO" id="GO:0030145">
    <property type="term" value="F:manganese ion binding"/>
    <property type="evidence" value="ECO:0007669"/>
    <property type="project" value="UniProtKB-UniRule"/>
</dbReference>
<dbReference type="GO" id="GO:0000210">
    <property type="term" value="F:NAD+ diphosphatase activity"/>
    <property type="evidence" value="ECO:0007669"/>
    <property type="project" value="UniProtKB-UniRule"/>
</dbReference>
<dbReference type="GO" id="GO:0035529">
    <property type="term" value="F:NADH pyrophosphatase activity"/>
    <property type="evidence" value="ECO:0007669"/>
    <property type="project" value="TreeGrafter"/>
</dbReference>
<dbReference type="GO" id="GO:0110153">
    <property type="term" value="F:RNA NAD-cap (NMN-forming) hydrolase activity"/>
    <property type="evidence" value="ECO:0007669"/>
    <property type="project" value="RHEA"/>
</dbReference>
<dbReference type="GO" id="GO:0008270">
    <property type="term" value="F:zinc ion binding"/>
    <property type="evidence" value="ECO:0007669"/>
    <property type="project" value="UniProtKB-UniRule"/>
</dbReference>
<dbReference type="GO" id="GO:0019677">
    <property type="term" value="P:NAD catabolic process"/>
    <property type="evidence" value="ECO:0007669"/>
    <property type="project" value="TreeGrafter"/>
</dbReference>
<dbReference type="GO" id="GO:0006734">
    <property type="term" value="P:NADH metabolic process"/>
    <property type="evidence" value="ECO:0007669"/>
    <property type="project" value="TreeGrafter"/>
</dbReference>
<dbReference type="GO" id="GO:0006742">
    <property type="term" value="P:NADP catabolic process"/>
    <property type="evidence" value="ECO:0007669"/>
    <property type="project" value="TreeGrafter"/>
</dbReference>
<dbReference type="CDD" id="cd03429">
    <property type="entry name" value="NUDIX_NADH_pyrophosphatase_Nudt13"/>
    <property type="match status" value="1"/>
</dbReference>
<dbReference type="FunFam" id="3.90.79.10:FF:000004">
    <property type="entry name" value="NADH pyrophosphatase"/>
    <property type="match status" value="1"/>
</dbReference>
<dbReference type="FunFam" id="3.90.79.20:FF:000001">
    <property type="entry name" value="NADH pyrophosphatase"/>
    <property type="match status" value="1"/>
</dbReference>
<dbReference type="Gene3D" id="3.90.79.20">
    <property type="match status" value="1"/>
</dbReference>
<dbReference type="Gene3D" id="3.90.79.10">
    <property type="entry name" value="Nucleoside Triphosphate Pyrophosphohydrolase"/>
    <property type="match status" value="1"/>
</dbReference>
<dbReference type="HAMAP" id="MF_00297">
    <property type="entry name" value="Nudix_NudC"/>
    <property type="match status" value="1"/>
</dbReference>
<dbReference type="InterPro" id="IPR050241">
    <property type="entry name" value="NAD-cap_RNA_hydrolase_NudC"/>
</dbReference>
<dbReference type="InterPro" id="IPR049734">
    <property type="entry name" value="NudC-like_C"/>
</dbReference>
<dbReference type="InterPro" id="IPR015797">
    <property type="entry name" value="NUDIX_hydrolase-like_dom_sf"/>
</dbReference>
<dbReference type="InterPro" id="IPR020084">
    <property type="entry name" value="NUDIX_hydrolase_CS"/>
</dbReference>
<dbReference type="InterPro" id="IPR000086">
    <property type="entry name" value="NUDIX_hydrolase_dom"/>
</dbReference>
<dbReference type="InterPro" id="IPR022925">
    <property type="entry name" value="RNA_Hydrolase_NudC"/>
</dbReference>
<dbReference type="InterPro" id="IPR015376">
    <property type="entry name" value="Znr_NADH_PPase"/>
</dbReference>
<dbReference type="NCBIfam" id="NF001299">
    <property type="entry name" value="PRK00241.1"/>
    <property type="match status" value="1"/>
</dbReference>
<dbReference type="PANTHER" id="PTHR42904:SF6">
    <property type="entry name" value="NAD-CAPPED RNA HYDROLASE NUDT12"/>
    <property type="match status" value="1"/>
</dbReference>
<dbReference type="PANTHER" id="PTHR42904">
    <property type="entry name" value="NUDIX HYDROLASE, NUDC SUBFAMILY"/>
    <property type="match status" value="1"/>
</dbReference>
<dbReference type="Pfam" id="PF00293">
    <property type="entry name" value="NUDIX"/>
    <property type="match status" value="1"/>
</dbReference>
<dbReference type="Pfam" id="PF09297">
    <property type="entry name" value="Zn_ribbon_NUD"/>
    <property type="match status" value="1"/>
</dbReference>
<dbReference type="SUPFAM" id="SSF55811">
    <property type="entry name" value="Nudix"/>
    <property type="match status" value="2"/>
</dbReference>
<dbReference type="PROSITE" id="PS51462">
    <property type="entry name" value="NUDIX"/>
    <property type="match status" value="1"/>
</dbReference>
<dbReference type="PROSITE" id="PS00893">
    <property type="entry name" value="NUDIX_BOX"/>
    <property type="match status" value="1"/>
</dbReference>